<organism>
    <name type="scientific">Moorella thermoacetica (strain ATCC 39073 / JCM 9320)</name>
    <dbReference type="NCBI Taxonomy" id="264732"/>
    <lineage>
        <taxon>Bacteria</taxon>
        <taxon>Bacillati</taxon>
        <taxon>Bacillota</taxon>
        <taxon>Clostridia</taxon>
        <taxon>Moorellales</taxon>
        <taxon>Moorellaceae</taxon>
        <taxon>Moorella</taxon>
    </lineage>
</organism>
<feature type="chain" id="PRO_0000237062" description="Small ribosomal subunit protein uS10">
    <location>
        <begin position="1"/>
        <end position="102"/>
    </location>
</feature>
<keyword id="KW-0687">Ribonucleoprotein</keyword>
<keyword id="KW-0689">Ribosomal protein</keyword>
<protein>
    <recommendedName>
        <fullName evidence="1">Small ribosomal subunit protein uS10</fullName>
    </recommendedName>
    <alternativeName>
        <fullName evidence="2">30S ribosomal protein S10</fullName>
    </alternativeName>
</protein>
<evidence type="ECO:0000255" key="1">
    <source>
        <dbReference type="HAMAP-Rule" id="MF_00508"/>
    </source>
</evidence>
<evidence type="ECO:0000305" key="2"/>
<comment type="function">
    <text evidence="1">Involved in the binding of tRNA to the ribosomes.</text>
</comment>
<comment type="subunit">
    <text evidence="1">Part of the 30S ribosomal subunit.</text>
</comment>
<comment type="similarity">
    <text evidence="1">Belongs to the universal ribosomal protein uS10 family.</text>
</comment>
<gene>
    <name evidence="1" type="primary">rpsJ</name>
    <name type="ordered locus">Moth_2461</name>
</gene>
<reference key="1">
    <citation type="journal article" date="2008" name="Environ. Microbiol.">
        <title>The complete genome sequence of Moorella thermoacetica (f. Clostridium thermoaceticum).</title>
        <authorList>
            <person name="Pierce E."/>
            <person name="Xie G."/>
            <person name="Barabote R.D."/>
            <person name="Saunders E."/>
            <person name="Han C.S."/>
            <person name="Detter J.C."/>
            <person name="Richardson P."/>
            <person name="Brettin T.S."/>
            <person name="Das A."/>
            <person name="Ljungdahl L.G."/>
            <person name="Ragsdale S.W."/>
        </authorList>
    </citation>
    <scope>NUCLEOTIDE SEQUENCE [LARGE SCALE GENOMIC DNA]</scope>
    <source>
        <strain>ATCC 39073 / JCM 9320</strain>
    </source>
</reference>
<proteinExistence type="inferred from homology"/>
<sequence length="102" mass="11693">MARQKIRIRLKAFDHRVLDQSSQKIVDTARRTGAVVSGPIPLPTEKNIFTILRSPHVNKDSREQFEMRTHKRLIDILEPTPKTVDALMRLDLPAGVDIEIKL</sequence>
<accession>Q2RFP6</accession>
<name>RS10_MOOTA</name>
<dbReference type="EMBL" id="CP000232">
    <property type="protein sequence ID" value="ABC20743.1"/>
    <property type="molecule type" value="Genomic_DNA"/>
</dbReference>
<dbReference type="RefSeq" id="YP_431286.1">
    <property type="nucleotide sequence ID" value="NC_007644.1"/>
</dbReference>
<dbReference type="SMR" id="Q2RFP6"/>
<dbReference type="STRING" id="264732.Moth_2461"/>
<dbReference type="EnsemblBacteria" id="ABC20743">
    <property type="protein sequence ID" value="ABC20743"/>
    <property type="gene ID" value="Moth_2461"/>
</dbReference>
<dbReference type="KEGG" id="mta:Moth_2461"/>
<dbReference type="PATRIC" id="fig|264732.11.peg.2679"/>
<dbReference type="eggNOG" id="COG0051">
    <property type="taxonomic scope" value="Bacteria"/>
</dbReference>
<dbReference type="HOGENOM" id="CLU_122625_1_3_9"/>
<dbReference type="OrthoDB" id="9804464at2"/>
<dbReference type="GO" id="GO:1990904">
    <property type="term" value="C:ribonucleoprotein complex"/>
    <property type="evidence" value="ECO:0007669"/>
    <property type="project" value="UniProtKB-KW"/>
</dbReference>
<dbReference type="GO" id="GO:0005840">
    <property type="term" value="C:ribosome"/>
    <property type="evidence" value="ECO:0007669"/>
    <property type="project" value="UniProtKB-KW"/>
</dbReference>
<dbReference type="GO" id="GO:0003735">
    <property type="term" value="F:structural constituent of ribosome"/>
    <property type="evidence" value="ECO:0007669"/>
    <property type="project" value="InterPro"/>
</dbReference>
<dbReference type="GO" id="GO:0000049">
    <property type="term" value="F:tRNA binding"/>
    <property type="evidence" value="ECO:0007669"/>
    <property type="project" value="UniProtKB-UniRule"/>
</dbReference>
<dbReference type="GO" id="GO:0006412">
    <property type="term" value="P:translation"/>
    <property type="evidence" value="ECO:0007669"/>
    <property type="project" value="UniProtKB-UniRule"/>
</dbReference>
<dbReference type="FunFam" id="3.30.70.600:FF:000001">
    <property type="entry name" value="30S ribosomal protein S10"/>
    <property type="match status" value="1"/>
</dbReference>
<dbReference type="Gene3D" id="3.30.70.600">
    <property type="entry name" value="Ribosomal protein S10 domain"/>
    <property type="match status" value="1"/>
</dbReference>
<dbReference type="HAMAP" id="MF_00508">
    <property type="entry name" value="Ribosomal_uS10"/>
    <property type="match status" value="1"/>
</dbReference>
<dbReference type="InterPro" id="IPR001848">
    <property type="entry name" value="Ribosomal_uS10"/>
</dbReference>
<dbReference type="InterPro" id="IPR018268">
    <property type="entry name" value="Ribosomal_uS10_CS"/>
</dbReference>
<dbReference type="InterPro" id="IPR027486">
    <property type="entry name" value="Ribosomal_uS10_dom"/>
</dbReference>
<dbReference type="InterPro" id="IPR036838">
    <property type="entry name" value="Ribosomal_uS10_dom_sf"/>
</dbReference>
<dbReference type="NCBIfam" id="NF001861">
    <property type="entry name" value="PRK00596.1"/>
    <property type="match status" value="1"/>
</dbReference>
<dbReference type="NCBIfam" id="TIGR01049">
    <property type="entry name" value="rpsJ_bact"/>
    <property type="match status" value="1"/>
</dbReference>
<dbReference type="PANTHER" id="PTHR11700">
    <property type="entry name" value="30S RIBOSOMAL PROTEIN S10 FAMILY MEMBER"/>
    <property type="match status" value="1"/>
</dbReference>
<dbReference type="Pfam" id="PF00338">
    <property type="entry name" value="Ribosomal_S10"/>
    <property type="match status" value="1"/>
</dbReference>
<dbReference type="PRINTS" id="PR00971">
    <property type="entry name" value="RIBOSOMALS10"/>
</dbReference>
<dbReference type="SMART" id="SM01403">
    <property type="entry name" value="Ribosomal_S10"/>
    <property type="match status" value="1"/>
</dbReference>
<dbReference type="SUPFAM" id="SSF54999">
    <property type="entry name" value="Ribosomal protein S10"/>
    <property type="match status" value="1"/>
</dbReference>
<dbReference type="PROSITE" id="PS00361">
    <property type="entry name" value="RIBOSOMAL_S10"/>
    <property type="match status" value="1"/>
</dbReference>